<sequence>MMTNFKFALKNLKVNFTSENIDKLRFYIEKVLLFSDRFNLVSNNVRNFDAMLLHALDSVSGLPIVKDKNPRQVLDVGSGAGFPGIVLALFDRCRKYVLLERSNKKAIFLKMISLELGLENVEVLEHNVEEEQNKYEFITIRAFGDIRKYANILGSILKSGGLIMAYKGKFDKVEFEMSYVKNLFDKVEIKSSELISDKERYFLLLYDYKC</sequence>
<evidence type="ECO:0000255" key="1">
    <source>
        <dbReference type="HAMAP-Rule" id="MF_00074"/>
    </source>
</evidence>
<proteinExistence type="inferred from homology"/>
<dbReference type="EC" id="2.1.1.-" evidence="1"/>
<dbReference type="EMBL" id="CP000976">
    <property type="protein sequence ID" value="ACH93132.1"/>
    <property type="molecule type" value="Genomic_DNA"/>
</dbReference>
<dbReference type="RefSeq" id="WP_012537944.1">
    <property type="nucleotide sequence ID" value="NC_011229.1"/>
</dbReference>
<dbReference type="SMR" id="B5RL03"/>
<dbReference type="STRING" id="412419.BDU_176"/>
<dbReference type="KEGG" id="bdu:BDU_176"/>
<dbReference type="eggNOG" id="COG0357">
    <property type="taxonomic scope" value="Bacteria"/>
</dbReference>
<dbReference type="HOGENOM" id="CLU_065341_2_0_12"/>
<dbReference type="OrthoDB" id="9808773at2"/>
<dbReference type="Proteomes" id="UP000000611">
    <property type="component" value="Chromosome"/>
</dbReference>
<dbReference type="GO" id="GO:0005829">
    <property type="term" value="C:cytosol"/>
    <property type="evidence" value="ECO:0007669"/>
    <property type="project" value="TreeGrafter"/>
</dbReference>
<dbReference type="GO" id="GO:0070043">
    <property type="term" value="F:rRNA (guanine-N7-)-methyltransferase activity"/>
    <property type="evidence" value="ECO:0007669"/>
    <property type="project" value="UniProtKB-UniRule"/>
</dbReference>
<dbReference type="Gene3D" id="3.40.50.150">
    <property type="entry name" value="Vaccinia Virus protein VP39"/>
    <property type="match status" value="1"/>
</dbReference>
<dbReference type="HAMAP" id="MF_00074">
    <property type="entry name" value="16SrRNA_methyltr_G"/>
    <property type="match status" value="1"/>
</dbReference>
<dbReference type="InterPro" id="IPR003682">
    <property type="entry name" value="rRNA_ssu_MeTfrase_G"/>
</dbReference>
<dbReference type="InterPro" id="IPR029063">
    <property type="entry name" value="SAM-dependent_MTases_sf"/>
</dbReference>
<dbReference type="NCBIfam" id="TIGR00138">
    <property type="entry name" value="rsmG_gidB"/>
    <property type="match status" value="1"/>
</dbReference>
<dbReference type="PANTHER" id="PTHR31760">
    <property type="entry name" value="S-ADENOSYL-L-METHIONINE-DEPENDENT METHYLTRANSFERASES SUPERFAMILY PROTEIN"/>
    <property type="match status" value="1"/>
</dbReference>
<dbReference type="PANTHER" id="PTHR31760:SF0">
    <property type="entry name" value="S-ADENOSYL-L-METHIONINE-DEPENDENT METHYLTRANSFERASES SUPERFAMILY PROTEIN"/>
    <property type="match status" value="1"/>
</dbReference>
<dbReference type="Pfam" id="PF02527">
    <property type="entry name" value="GidB"/>
    <property type="match status" value="1"/>
</dbReference>
<dbReference type="PIRSF" id="PIRSF003078">
    <property type="entry name" value="GidB"/>
    <property type="match status" value="1"/>
</dbReference>
<dbReference type="SUPFAM" id="SSF53335">
    <property type="entry name" value="S-adenosyl-L-methionine-dependent methyltransferases"/>
    <property type="match status" value="1"/>
</dbReference>
<protein>
    <recommendedName>
        <fullName evidence="1">Ribosomal RNA small subunit methyltransferase G</fullName>
        <ecNumber evidence="1">2.1.1.-</ecNumber>
    </recommendedName>
    <alternativeName>
        <fullName evidence="1">16S rRNA 7-methylguanosine methyltransferase</fullName>
        <shortName evidence="1">16S rRNA m7G methyltransferase</shortName>
    </alternativeName>
</protein>
<reference key="1">
    <citation type="journal article" date="2008" name="PLoS Genet.">
        <title>The genome of Borrelia recurrentis, the agent of deadly louse-borne relapsing fever, is a degraded subset of tick-borne Borrelia duttonii.</title>
        <authorList>
            <person name="Lescot M."/>
            <person name="Audic S."/>
            <person name="Robert C."/>
            <person name="Nguyen T.T."/>
            <person name="Blanc G."/>
            <person name="Cutler S.J."/>
            <person name="Wincker P."/>
            <person name="Couloux A."/>
            <person name="Claverie J.-M."/>
            <person name="Raoult D."/>
            <person name="Drancourt M."/>
        </authorList>
    </citation>
    <scope>NUCLEOTIDE SEQUENCE [LARGE SCALE GENOMIC DNA]</scope>
    <source>
        <strain>Ly</strain>
    </source>
</reference>
<comment type="function">
    <text evidence="1">Specifically methylates the N7 position of a guanine in 16S rRNA.</text>
</comment>
<comment type="subcellular location">
    <subcellularLocation>
        <location evidence="1">Cytoplasm</location>
    </subcellularLocation>
</comment>
<comment type="similarity">
    <text evidence="1">Belongs to the methyltransferase superfamily. RNA methyltransferase RsmG family.</text>
</comment>
<keyword id="KW-0963">Cytoplasm</keyword>
<keyword id="KW-0489">Methyltransferase</keyword>
<keyword id="KW-0698">rRNA processing</keyword>
<keyword id="KW-0949">S-adenosyl-L-methionine</keyword>
<keyword id="KW-0808">Transferase</keyword>
<name>RSMG_BORDL</name>
<gene>
    <name evidence="1" type="primary">rsmG</name>
    <name type="ordered locus">BDU_176</name>
</gene>
<organism>
    <name type="scientific">Borrelia duttonii (strain Ly)</name>
    <dbReference type="NCBI Taxonomy" id="412419"/>
    <lineage>
        <taxon>Bacteria</taxon>
        <taxon>Pseudomonadati</taxon>
        <taxon>Spirochaetota</taxon>
        <taxon>Spirochaetia</taxon>
        <taxon>Spirochaetales</taxon>
        <taxon>Borreliaceae</taxon>
        <taxon>Borrelia</taxon>
    </lineage>
</organism>
<feature type="chain" id="PRO_1000092612" description="Ribosomal RNA small subunit methyltransferase G">
    <location>
        <begin position="1"/>
        <end position="210"/>
    </location>
</feature>
<feature type="binding site" evidence="1">
    <location>
        <position position="77"/>
    </location>
    <ligand>
        <name>S-adenosyl-L-methionine</name>
        <dbReference type="ChEBI" id="CHEBI:59789"/>
    </ligand>
</feature>
<feature type="binding site" evidence="1">
    <location>
        <position position="82"/>
    </location>
    <ligand>
        <name>S-adenosyl-L-methionine</name>
        <dbReference type="ChEBI" id="CHEBI:59789"/>
    </ligand>
</feature>
<feature type="binding site" evidence="1">
    <location>
        <begin position="100"/>
        <end position="102"/>
    </location>
    <ligand>
        <name>S-adenosyl-L-methionine</name>
        <dbReference type="ChEBI" id="CHEBI:59789"/>
    </ligand>
</feature>
<feature type="binding site" evidence="1">
    <location>
        <begin position="128"/>
        <end position="129"/>
    </location>
    <ligand>
        <name>S-adenosyl-L-methionine</name>
        <dbReference type="ChEBI" id="CHEBI:59789"/>
    </ligand>
</feature>
<feature type="binding site" evidence="1">
    <location>
        <position position="141"/>
    </location>
    <ligand>
        <name>S-adenosyl-L-methionine</name>
        <dbReference type="ChEBI" id="CHEBI:59789"/>
    </ligand>
</feature>
<accession>B5RL03</accession>